<evidence type="ECO:0000255" key="1">
    <source>
        <dbReference type="HAMAP-Rule" id="MF_01588"/>
    </source>
</evidence>
<reference key="1">
    <citation type="journal article" date="2008" name="PLoS ONE">
        <title>Genome sequence of the saprophyte Leptospira biflexa provides insights into the evolution of Leptospira and the pathogenesis of leptospirosis.</title>
        <authorList>
            <person name="Picardeau M."/>
            <person name="Bulach D.M."/>
            <person name="Bouchier C."/>
            <person name="Zuerner R.L."/>
            <person name="Zidane N."/>
            <person name="Wilson P.J."/>
            <person name="Creno S."/>
            <person name="Kuczek E.S."/>
            <person name="Bommezzadri S."/>
            <person name="Davis J.C."/>
            <person name="McGrath A."/>
            <person name="Johnson M.J."/>
            <person name="Boursaux-Eude C."/>
            <person name="Seemann T."/>
            <person name="Rouy Z."/>
            <person name="Coppel R.L."/>
            <person name="Rood J.I."/>
            <person name="Lajus A."/>
            <person name="Davies J.K."/>
            <person name="Medigue C."/>
            <person name="Adler B."/>
        </authorList>
    </citation>
    <scope>NUCLEOTIDE SEQUENCE [LARGE SCALE GENOMIC DNA]</scope>
    <source>
        <strain>Patoc 1 / Ames</strain>
    </source>
</reference>
<keyword id="KW-0227">DNA damage</keyword>
<keyword id="KW-0234">DNA repair</keyword>
<keyword id="KW-0235">DNA replication</keyword>
<keyword id="KW-0436">Ligase</keyword>
<keyword id="KW-0460">Magnesium</keyword>
<keyword id="KW-0464">Manganese</keyword>
<keyword id="KW-0479">Metal-binding</keyword>
<keyword id="KW-0520">NAD</keyword>
<keyword id="KW-0862">Zinc</keyword>
<organism>
    <name type="scientific">Leptospira biflexa serovar Patoc (strain Patoc 1 / Ames)</name>
    <dbReference type="NCBI Taxonomy" id="355278"/>
    <lineage>
        <taxon>Bacteria</taxon>
        <taxon>Pseudomonadati</taxon>
        <taxon>Spirochaetota</taxon>
        <taxon>Spirochaetia</taxon>
        <taxon>Leptospirales</taxon>
        <taxon>Leptospiraceae</taxon>
        <taxon>Leptospira</taxon>
    </lineage>
</organism>
<name>DNLJ_LEPBA</name>
<comment type="function">
    <text evidence="1">DNA ligase that catalyzes the formation of phosphodiester linkages between 5'-phosphoryl and 3'-hydroxyl groups in double-stranded DNA using NAD as a coenzyme and as the energy source for the reaction. It is essential for DNA replication and repair of damaged DNA.</text>
</comment>
<comment type="catalytic activity">
    <reaction evidence="1">
        <text>NAD(+) + (deoxyribonucleotide)n-3'-hydroxyl + 5'-phospho-(deoxyribonucleotide)m = (deoxyribonucleotide)n+m + AMP + beta-nicotinamide D-nucleotide.</text>
        <dbReference type="EC" id="6.5.1.2"/>
    </reaction>
</comment>
<comment type="cofactor">
    <cofactor evidence="1">
        <name>Mg(2+)</name>
        <dbReference type="ChEBI" id="CHEBI:18420"/>
    </cofactor>
    <cofactor evidence="1">
        <name>Mn(2+)</name>
        <dbReference type="ChEBI" id="CHEBI:29035"/>
    </cofactor>
</comment>
<comment type="similarity">
    <text evidence="1">Belongs to the NAD-dependent DNA ligase family. LigA subfamily.</text>
</comment>
<proteinExistence type="inferred from homology"/>
<gene>
    <name evidence="1" type="primary">ligA</name>
    <name type="ordered locus">LBF_0211</name>
</gene>
<feature type="chain" id="PRO_0000340358" description="DNA ligase">
    <location>
        <begin position="1"/>
        <end position="671"/>
    </location>
</feature>
<feature type="domain" description="BRCT" evidence="1">
    <location>
        <begin position="586"/>
        <end position="671"/>
    </location>
</feature>
<feature type="active site" description="N6-AMP-lysine intermediate" evidence="1">
    <location>
        <position position="115"/>
    </location>
</feature>
<feature type="binding site" evidence="1">
    <location>
        <begin position="38"/>
        <end position="42"/>
    </location>
    <ligand>
        <name>NAD(+)</name>
        <dbReference type="ChEBI" id="CHEBI:57540"/>
    </ligand>
</feature>
<feature type="binding site" evidence="1">
    <location>
        <begin position="87"/>
        <end position="88"/>
    </location>
    <ligand>
        <name>NAD(+)</name>
        <dbReference type="ChEBI" id="CHEBI:57540"/>
    </ligand>
</feature>
<feature type="binding site" evidence="1">
    <location>
        <position position="113"/>
    </location>
    <ligand>
        <name>NAD(+)</name>
        <dbReference type="ChEBI" id="CHEBI:57540"/>
    </ligand>
</feature>
<feature type="binding site" evidence="1">
    <location>
        <position position="136"/>
    </location>
    <ligand>
        <name>NAD(+)</name>
        <dbReference type="ChEBI" id="CHEBI:57540"/>
    </ligand>
</feature>
<feature type="binding site" evidence="1">
    <location>
        <position position="170"/>
    </location>
    <ligand>
        <name>NAD(+)</name>
        <dbReference type="ChEBI" id="CHEBI:57540"/>
    </ligand>
</feature>
<feature type="binding site" evidence="1">
    <location>
        <position position="282"/>
    </location>
    <ligand>
        <name>NAD(+)</name>
        <dbReference type="ChEBI" id="CHEBI:57540"/>
    </ligand>
</feature>
<feature type="binding site" evidence="1">
    <location>
        <position position="306"/>
    </location>
    <ligand>
        <name>NAD(+)</name>
        <dbReference type="ChEBI" id="CHEBI:57540"/>
    </ligand>
</feature>
<feature type="binding site" evidence="1">
    <location>
        <position position="396"/>
    </location>
    <ligand>
        <name>Zn(2+)</name>
        <dbReference type="ChEBI" id="CHEBI:29105"/>
    </ligand>
</feature>
<feature type="binding site" evidence="1">
    <location>
        <position position="399"/>
    </location>
    <ligand>
        <name>Zn(2+)</name>
        <dbReference type="ChEBI" id="CHEBI:29105"/>
    </ligand>
</feature>
<feature type="binding site" evidence="1">
    <location>
        <position position="414"/>
    </location>
    <ligand>
        <name>Zn(2+)</name>
        <dbReference type="ChEBI" id="CHEBI:29105"/>
    </ligand>
</feature>
<feature type="binding site" evidence="1">
    <location>
        <position position="419"/>
    </location>
    <ligand>
        <name>Zn(2+)</name>
        <dbReference type="ChEBI" id="CHEBI:29105"/>
    </ligand>
</feature>
<accession>B0SA75</accession>
<sequence length="671" mass="75388">MAKKTKAEDPKKRIITLRKEIGRHNDLYYKENAPVITDKEFDILVKELQKLESENPDLADVSSPTAQVGSDLSPQFSKFKHKVPVLSLENTYNETELSEWLEKTGIEENYSLEWKIDGASILLYYEKGKLTNCVTRGSGGIGDVVTENVKTISTIPHTLSEEMNLTVRGEIFMTFADFEEFNEEYGGKFANPRNLAAGSIKQKDPLDVAKRPLRIYVYDVYFSSSRKGINTHKDILSLLKKEKFPLAPDTTILTGKKLLREIESFRKKKDKMPFPVDGLVIKLDSLNLRESLGETSHSPRWARAFKFDALLKESTIEEIDFAIGRTGKVTPRAKVTPISLAGTTVTYATLHNQDYINQLGAGIGAKVLISKRGEIIPAVEKVTFPPKTIFVLPNQCPSCNTKLTKVDDSVDFFCTNRHCPERKLNQLIFFCSKKQMNIEGLGERQIQIFFEKGWVKDIPDLYTLEKYKPTLLELDGFGEKSVKIIFDAIEKSKEKDFRFTLPSIGLNEVGPKVTEILIENGYDSWDKLLTLSKSKTANEDLKAIHGIGPRTIEALLTHLKDKETLKLVATLKKLGLKFQADETEKSDLQPFVGQSWCVTGSFENFQPRDLAMDLITKHGGKKVTSVSSKTTHLLYGPGAGSKLDKATELGVKLVTESEFLDLLKQEGIAID</sequence>
<protein>
    <recommendedName>
        <fullName evidence="1">DNA ligase</fullName>
        <ecNumber evidence="1">6.5.1.2</ecNumber>
    </recommendedName>
    <alternativeName>
        <fullName evidence="1">Polydeoxyribonucleotide synthase [NAD(+)]</fullName>
    </alternativeName>
</protein>
<dbReference type="EC" id="6.5.1.2" evidence="1"/>
<dbReference type="EMBL" id="CP000777">
    <property type="protein sequence ID" value="ABZ92757.1"/>
    <property type="molecule type" value="Genomic_DNA"/>
</dbReference>
<dbReference type="RefSeq" id="WP_012387250.1">
    <property type="nucleotide sequence ID" value="NC_010842.1"/>
</dbReference>
<dbReference type="SMR" id="B0SA75"/>
<dbReference type="KEGG" id="lbf:LBF_0211"/>
<dbReference type="HOGENOM" id="CLU_007764_2_1_12"/>
<dbReference type="GO" id="GO:0003677">
    <property type="term" value="F:DNA binding"/>
    <property type="evidence" value="ECO:0007669"/>
    <property type="project" value="InterPro"/>
</dbReference>
<dbReference type="GO" id="GO:0003911">
    <property type="term" value="F:DNA ligase (NAD+) activity"/>
    <property type="evidence" value="ECO:0007669"/>
    <property type="project" value="UniProtKB-UniRule"/>
</dbReference>
<dbReference type="GO" id="GO:0046872">
    <property type="term" value="F:metal ion binding"/>
    <property type="evidence" value="ECO:0007669"/>
    <property type="project" value="UniProtKB-KW"/>
</dbReference>
<dbReference type="GO" id="GO:0006281">
    <property type="term" value="P:DNA repair"/>
    <property type="evidence" value="ECO:0007669"/>
    <property type="project" value="UniProtKB-KW"/>
</dbReference>
<dbReference type="GO" id="GO:0006260">
    <property type="term" value="P:DNA replication"/>
    <property type="evidence" value="ECO:0007669"/>
    <property type="project" value="UniProtKB-KW"/>
</dbReference>
<dbReference type="CDD" id="cd17748">
    <property type="entry name" value="BRCT_DNA_ligase_like"/>
    <property type="match status" value="1"/>
</dbReference>
<dbReference type="CDD" id="cd00114">
    <property type="entry name" value="LIGANc"/>
    <property type="match status" value="1"/>
</dbReference>
<dbReference type="FunFam" id="1.10.150.20:FF:000007">
    <property type="entry name" value="DNA ligase"/>
    <property type="match status" value="1"/>
</dbReference>
<dbReference type="Gene3D" id="6.20.10.30">
    <property type="match status" value="1"/>
</dbReference>
<dbReference type="Gene3D" id="1.10.150.20">
    <property type="entry name" value="5' to 3' exonuclease, C-terminal subdomain"/>
    <property type="match status" value="2"/>
</dbReference>
<dbReference type="Gene3D" id="3.40.50.10190">
    <property type="entry name" value="BRCT domain"/>
    <property type="match status" value="1"/>
</dbReference>
<dbReference type="Gene3D" id="3.30.470.30">
    <property type="entry name" value="DNA ligase/mRNA capping enzyme"/>
    <property type="match status" value="1"/>
</dbReference>
<dbReference type="Gene3D" id="1.10.287.610">
    <property type="entry name" value="Helix hairpin bin"/>
    <property type="match status" value="1"/>
</dbReference>
<dbReference type="Gene3D" id="2.40.50.140">
    <property type="entry name" value="Nucleic acid-binding proteins"/>
    <property type="match status" value="1"/>
</dbReference>
<dbReference type="HAMAP" id="MF_01588">
    <property type="entry name" value="DNA_ligase_A"/>
    <property type="match status" value="1"/>
</dbReference>
<dbReference type="InterPro" id="IPR001357">
    <property type="entry name" value="BRCT_dom"/>
</dbReference>
<dbReference type="InterPro" id="IPR036420">
    <property type="entry name" value="BRCT_dom_sf"/>
</dbReference>
<dbReference type="InterPro" id="IPR001679">
    <property type="entry name" value="DNA_ligase"/>
</dbReference>
<dbReference type="InterPro" id="IPR013839">
    <property type="entry name" value="DNAligase_adenylation"/>
</dbReference>
<dbReference type="InterPro" id="IPR013840">
    <property type="entry name" value="DNAligase_N"/>
</dbReference>
<dbReference type="InterPro" id="IPR003583">
    <property type="entry name" value="Hlx-hairpin-Hlx_DNA-bd_motif"/>
</dbReference>
<dbReference type="InterPro" id="IPR012340">
    <property type="entry name" value="NA-bd_OB-fold"/>
</dbReference>
<dbReference type="InterPro" id="IPR004150">
    <property type="entry name" value="NAD_DNA_ligase_OB"/>
</dbReference>
<dbReference type="InterPro" id="IPR010994">
    <property type="entry name" value="RuvA_2-like"/>
</dbReference>
<dbReference type="InterPro" id="IPR004149">
    <property type="entry name" value="Znf_DNAligase_C4"/>
</dbReference>
<dbReference type="NCBIfam" id="TIGR00575">
    <property type="entry name" value="dnlj"/>
    <property type="match status" value="1"/>
</dbReference>
<dbReference type="NCBIfam" id="NF005932">
    <property type="entry name" value="PRK07956.1"/>
    <property type="match status" value="1"/>
</dbReference>
<dbReference type="Pfam" id="PF00533">
    <property type="entry name" value="BRCT"/>
    <property type="match status" value="1"/>
</dbReference>
<dbReference type="Pfam" id="PF01653">
    <property type="entry name" value="DNA_ligase_aden"/>
    <property type="match status" value="1"/>
</dbReference>
<dbReference type="Pfam" id="PF03120">
    <property type="entry name" value="DNA_ligase_OB"/>
    <property type="match status" value="1"/>
</dbReference>
<dbReference type="Pfam" id="PF03119">
    <property type="entry name" value="DNA_ligase_ZBD"/>
    <property type="match status" value="1"/>
</dbReference>
<dbReference type="Pfam" id="PF14520">
    <property type="entry name" value="HHH_5"/>
    <property type="match status" value="1"/>
</dbReference>
<dbReference type="Pfam" id="PF22745">
    <property type="entry name" value="Nlig-Ia"/>
    <property type="match status" value="1"/>
</dbReference>
<dbReference type="PIRSF" id="PIRSF001604">
    <property type="entry name" value="LigA"/>
    <property type="match status" value="1"/>
</dbReference>
<dbReference type="SMART" id="SM00292">
    <property type="entry name" value="BRCT"/>
    <property type="match status" value="1"/>
</dbReference>
<dbReference type="SMART" id="SM00278">
    <property type="entry name" value="HhH1"/>
    <property type="match status" value="2"/>
</dbReference>
<dbReference type="SMART" id="SM00532">
    <property type="entry name" value="LIGANc"/>
    <property type="match status" value="1"/>
</dbReference>
<dbReference type="SUPFAM" id="SSF52113">
    <property type="entry name" value="BRCT domain"/>
    <property type="match status" value="1"/>
</dbReference>
<dbReference type="SUPFAM" id="SSF56091">
    <property type="entry name" value="DNA ligase/mRNA capping enzyme, catalytic domain"/>
    <property type="match status" value="1"/>
</dbReference>
<dbReference type="SUPFAM" id="SSF50249">
    <property type="entry name" value="Nucleic acid-binding proteins"/>
    <property type="match status" value="1"/>
</dbReference>
<dbReference type="SUPFAM" id="SSF47781">
    <property type="entry name" value="RuvA domain 2-like"/>
    <property type="match status" value="1"/>
</dbReference>
<dbReference type="PROSITE" id="PS50172">
    <property type="entry name" value="BRCT"/>
    <property type="match status" value="1"/>
</dbReference>